<comment type="similarity">
    <text evidence="2">Belongs to the Di19 family.</text>
</comment>
<keyword id="KW-1185">Reference proteome</keyword>
<proteinExistence type="evidence at transcript level"/>
<protein>
    <recommendedName>
        <fullName>Protein DEHYDRATION-INDUCED 19 homolog 5</fullName>
    </recommendedName>
    <alternativeName>
        <fullName>OsDi19-5</fullName>
    </alternativeName>
</protein>
<accession>Q5JME8</accession>
<accession>B7EGH2</accession>
<organism>
    <name type="scientific">Oryza sativa subsp. japonica</name>
    <name type="common">Rice</name>
    <dbReference type="NCBI Taxonomy" id="39947"/>
    <lineage>
        <taxon>Eukaryota</taxon>
        <taxon>Viridiplantae</taxon>
        <taxon>Streptophyta</taxon>
        <taxon>Embryophyta</taxon>
        <taxon>Tracheophyta</taxon>
        <taxon>Spermatophyta</taxon>
        <taxon>Magnoliopsida</taxon>
        <taxon>Liliopsida</taxon>
        <taxon>Poales</taxon>
        <taxon>Poaceae</taxon>
        <taxon>BOP clade</taxon>
        <taxon>Oryzoideae</taxon>
        <taxon>Oryzeae</taxon>
        <taxon>Oryzinae</taxon>
        <taxon>Oryza</taxon>
        <taxon>Oryza sativa</taxon>
    </lineage>
</organism>
<sequence>MEVEASYSYGFLPSGRHQPYAPPPPHPAEEGELWEYFPCPFCYIEVEVPFICNHLQEEHCFDTRNAVCPLCADNIGRDMGAHFRVQHSHLLKRRKPSRPSSSWPTPSNNSDPYFEGPPQYMMNNRTYQDPAPDPLLSQFICSMAQTDTNSDNTNTEIAVSAVSHDQRLSQRVTLTDDASKLELKERLQRIEFVKEIIMSTIL</sequence>
<reference key="1">
    <citation type="journal article" date="2002" name="Nature">
        <title>The genome sequence and structure of rice chromosome 1.</title>
        <authorList>
            <person name="Sasaki T."/>
            <person name="Matsumoto T."/>
            <person name="Yamamoto K."/>
            <person name="Sakata K."/>
            <person name="Baba T."/>
            <person name="Katayose Y."/>
            <person name="Wu J."/>
            <person name="Niimura Y."/>
            <person name="Cheng Z."/>
            <person name="Nagamura Y."/>
            <person name="Antonio B.A."/>
            <person name="Kanamori H."/>
            <person name="Hosokawa S."/>
            <person name="Masukawa M."/>
            <person name="Arikawa K."/>
            <person name="Chiden Y."/>
            <person name="Hayashi M."/>
            <person name="Okamoto M."/>
            <person name="Ando T."/>
            <person name="Aoki H."/>
            <person name="Arita K."/>
            <person name="Hamada M."/>
            <person name="Harada C."/>
            <person name="Hijishita S."/>
            <person name="Honda M."/>
            <person name="Ichikawa Y."/>
            <person name="Idonuma A."/>
            <person name="Iijima M."/>
            <person name="Ikeda M."/>
            <person name="Ikeno M."/>
            <person name="Ito S."/>
            <person name="Ito T."/>
            <person name="Ito Y."/>
            <person name="Ito Y."/>
            <person name="Iwabuchi A."/>
            <person name="Kamiya K."/>
            <person name="Karasawa W."/>
            <person name="Katagiri S."/>
            <person name="Kikuta A."/>
            <person name="Kobayashi N."/>
            <person name="Kono I."/>
            <person name="Machita K."/>
            <person name="Maehara T."/>
            <person name="Mizuno H."/>
            <person name="Mizubayashi T."/>
            <person name="Mukai Y."/>
            <person name="Nagasaki H."/>
            <person name="Nakashima M."/>
            <person name="Nakama Y."/>
            <person name="Nakamichi Y."/>
            <person name="Nakamura M."/>
            <person name="Namiki N."/>
            <person name="Negishi M."/>
            <person name="Ohta I."/>
            <person name="Ono N."/>
            <person name="Saji S."/>
            <person name="Sakai K."/>
            <person name="Shibata M."/>
            <person name="Shimokawa T."/>
            <person name="Shomura A."/>
            <person name="Song J."/>
            <person name="Takazaki Y."/>
            <person name="Terasawa K."/>
            <person name="Tsuji K."/>
            <person name="Waki K."/>
            <person name="Yamagata H."/>
            <person name="Yamane H."/>
            <person name="Yoshiki S."/>
            <person name="Yoshihara R."/>
            <person name="Yukawa K."/>
            <person name="Zhong H."/>
            <person name="Iwama H."/>
            <person name="Endo T."/>
            <person name="Ito H."/>
            <person name="Hahn J.H."/>
            <person name="Kim H.-I."/>
            <person name="Eun M.-Y."/>
            <person name="Yano M."/>
            <person name="Jiang J."/>
            <person name="Gojobori T."/>
        </authorList>
    </citation>
    <scope>NUCLEOTIDE SEQUENCE [LARGE SCALE GENOMIC DNA]</scope>
    <source>
        <strain>cv. Nipponbare</strain>
    </source>
</reference>
<reference key="2">
    <citation type="journal article" date="2005" name="Nature">
        <title>The map-based sequence of the rice genome.</title>
        <authorList>
            <consortium name="International rice genome sequencing project (IRGSP)"/>
        </authorList>
    </citation>
    <scope>NUCLEOTIDE SEQUENCE [LARGE SCALE GENOMIC DNA]</scope>
    <source>
        <strain>cv. Nipponbare</strain>
    </source>
</reference>
<reference key="3">
    <citation type="journal article" date="2008" name="Nucleic Acids Res.">
        <title>The rice annotation project database (RAP-DB): 2008 update.</title>
        <authorList>
            <consortium name="The rice annotation project (RAP)"/>
        </authorList>
    </citation>
    <scope>GENOME REANNOTATION</scope>
    <source>
        <strain>cv. Nipponbare</strain>
    </source>
</reference>
<reference key="4">
    <citation type="journal article" date="2013" name="Rice">
        <title>Improvement of the Oryza sativa Nipponbare reference genome using next generation sequence and optical map data.</title>
        <authorList>
            <person name="Kawahara Y."/>
            <person name="de la Bastide M."/>
            <person name="Hamilton J.P."/>
            <person name="Kanamori H."/>
            <person name="McCombie W.R."/>
            <person name="Ouyang S."/>
            <person name="Schwartz D.C."/>
            <person name="Tanaka T."/>
            <person name="Wu J."/>
            <person name="Zhou S."/>
            <person name="Childs K.L."/>
            <person name="Davidson R.M."/>
            <person name="Lin H."/>
            <person name="Quesada-Ocampo L."/>
            <person name="Vaillancourt B."/>
            <person name="Sakai H."/>
            <person name="Lee S.S."/>
            <person name="Kim J."/>
            <person name="Numa H."/>
            <person name="Itoh T."/>
            <person name="Buell C.R."/>
            <person name="Matsumoto T."/>
        </authorList>
    </citation>
    <scope>GENOME REANNOTATION</scope>
    <source>
        <strain>cv. Nipponbare</strain>
    </source>
</reference>
<reference key="5">
    <citation type="journal article" date="2005" name="PLoS Biol.">
        <title>The genomes of Oryza sativa: a history of duplications.</title>
        <authorList>
            <person name="Yu J."/>
            <person name="Wang J."/>
            <person name="Lin W."/>
            <person name="Li S."/>
            <person name="Li H."/>
            <person name="Zhou J."/>
            <person name="Ni P."/>
            <person name="Dong W."/>
            <person name="Hu S."/>
            <person name="Zeng C."/>
            <person name="Zhang J."/>
            <person name="Zhang Y."/>
            <person name="Li R."/>
            <person name="Xu Z."/>
            <person name="Li S."/>
            <person name="Li X."/>
            <person name="Zheng H."/>
            <person name="Cong L."/>
            <person name="Lin L."/>
            <person name="Yin J."/>
            <person name="Geng J."/>
            <person name="Li G."/>
            <person name="Shi J."/>
            <person name="Liu J."/>
            <person name="Lv H."/>
            <person name="Li J."/>
            <person name="Wang J."/>
            <person name="Deng Y."/>
            <person name="Ran L."/>
            <person name="Shi X."/>
            <person name="Wang X."/>
            <person name="Wu Q."/>
            <person name="Li C."/>
            <person name="Ren X."/>
            <person name="Wang J."/>
            <person name="Wang X."/>
            <person name="Li D."/>
            <person name="Liu D."/>
            <person name="Zhang X."/>
            <person name="Ji Z."/>
            <person name="Zhao W."/>
            <person name="Sun Y."/>
            <person name="Zhang Z."/>
            <person name="Bao J."/>
            <person name="Han Y."/>
            <person name="Dong L."/>
            <person name="Ji J."/>
            <person name="Chen P."/>
            <person name="Wu S."/>
            <person name="Liu J."/>
            <person name="Xiao Y."/>
            <person name="Bu D."/>
            <person name="Tan J."/>
            <person name="Yang L."/>
            <person name="Ye C."/>
            <person name="Zhang J."/>
            <person name="Xu J."/>
            <person name="Zhou Y."/>
            <person name="Yu Y."/>
            <person name="Zhang B."/>
            <person name="Zhuang S."/>
            <person name="Wei H."/>
            <person name="Liu B."/>
            <person name="Lei M."/>
            <person name="Yu H."/>
            <person name="Li Y."/>
            <person name="Xu H."/>
            <person name="Wei S."/>
            <person name="He X."/>
            <person name="Fang L."/>
            <person name="Zhang Z."/>
            <person name="Zhang Y."/>
            <person name="Huang X."/>
            <person name="Su Z."/>
            <person name="Tong W."/>
            <person name="Li J."/>
            <person name="Tong Z."/>
            <person name="Li S."/>
            <person name="Ye J."/>
            <person name="Wang L."/>
            <person name="Fang L."/>
            <person name="Lei T."/>
            <person name="Chen C.-S."/>
            <person name="Chen H.-C."/>
            <person name="Xu Z."/>
            <person name="Li H."/>
            <person name="Huang H."/>
            <person name="Zhang F."/>
            <person name="Xu H."/>
            <person name="Li N."/>
            <person name="Zhao C."/>
            <person name="Li S."/>
            <person name="Dong L."/>
            <person name="Huang Y."/>
            <person name="Li L."/>
            <person name="Xi Y."/>
            <person name="Qi Q."/>
            <person name="Li W."/>
            <person name="Zhang B."/>
            <person name="Hu W."/>
            <person name="Zhang Y."/>
            <person name="Tian X."/>
            <person name="Jiao Y."/>
            <person name="Liang X."/>
            <person name="Jin J."/>
            <person name="Gao L."/>
            <person name="Zheng W."/>
            <person name="Hao B."/>
            <person name="Liu S.-M."/>
            <person name="Wang W."/>
            <person name="Yuan L."/>
            <person name="Cao M."/>
            <person name="McDermott J."/>
            <person name="Samudrala R."/>
            <person name="Wang J."/>
            <person name="Wong G.K.-S."/>
            <person name="Yang H."/>
        </authorList>
    </citation>
    <scope>NUCLEOTIDE SEQUENCE [LARGE SCALE GENOMIC DNA]</scope>
    <source>
        <strain>cv. Nipponbare</strain>
    </source>
</reference>
<reference key="6">
    <citation type="journal article" date="2003" name="Science">
        <title>Collection, mapping, and annotation of over 28,000 cDNA clones from japonica rice.</title>
        <authorList>
            <consortium name="The rice full-length cDNA consortium"/>
        </authorList>
    </citation>
    <scope>NUCLEOTIDE SEQUENCE [LARGE SCALE MRNA]</scope>
    <source>
        <strain>cv. Nipponbare</strain>
    </source>
</reference>
<reference key="7">
    <citation type="journal article" date="2006" name="Plant Mol. Biol.">
        <title>The Arabidopsis AtDi19 gene family encodes a novel type of Cys2/His2 zinc-finger protein implicated in ABA-independent dehydration, high-salinity stress and light signaling pathways.</title>
        <authorList>
            <person name="Rodriguez Milla M.A."/>
            <person name="Townsend J."/>
            <person name="Chang I.-F."/>
            <person name="Cushman J.C."/>
        </authorList>
    </citation>
    <scope>GENE FAMILY</scope>
    <scope>NOMENCLATURE</scope>
</reference>
<gene>
    <name type="primary">DI19-5</name>
    <name type="ordered locus">Os01g0971100</name>
    <name type="ordered locus">LOC_Os01g73960</name>
    <name type="ORF">OsJ_004810</name>
    <name type="ORF">P0518C01.8</name>
</gene>
<feature type="chain" id="PRO_0000304424" description="Protein DEHYDRATION-INDUCED 19 homolog 5">
    <location>
        <begin position="1"/>
        <end position="202"/>
    </location>
</feature>
<feature type="region of interest" description="Disordered" evidence="1">
    <location>
        <begin position="88"/>
        <end position="120"/>
    </location>
</feature>
<feature type="compositionally biased region" description="Basic residues" evidence="1">
    <location>
        <begin position="88"/>
        <end position="97"/>
    </location>
</feature>
<feature type="compositionally biased region" description="Low complexity" evidence="1">
    <location>
        <begin position="98"/>
        <end position="112"/>
    </location>
</feature>
<evidence type="ECO:0000256" key="1">
    <source>
        <dbReference type="SAM" id="MobiDB-lite"/>
    </source>
</evidence>
<evidence type="ECO:0000305" key="2"/>
<name>DI195_ORYSJ</name>
<dbReference type="EMBL" id="AP003277">
    <property type="protein sequence ID" value="BAD87360.1"/>
    <property type="molecule type" value="Genomic_DNA"/>
</dbReference>
<dbReference type="EMBL" id="AP008207">
    <property type="protein sequence ID" value="BAF07445.1"/>
    <property type="molecule type" value="Genomic_DNA"/>
</dbReference>
<dbReference type="EMBL" id="AP014957">
    <property type="protein sequence ID" value="BAS76426.1"/>
    <property type="molecule type" value="Genomic_DNA"/>
</dbReference>
<dbReference type="EMBL" id="CM000138">
    <property type="protein sequence ID" value="EAZ14985.1"/>
    <property type="molecule type" value="Genomic_DNA"/>
</dbReference>
<dbReference type="EMBL" id="AK069516">
    <property type="protein sequence ID" value="BAG91469.1"/>
    <property type="molecule type" value="mRNA"/>
</dbReference>
<dbReference type="RefSeq" id="XP_015640788.1">
    <property type="nucleotide sequence ID" value="XM_015785302.1"/>
</dbReference>
<dbReference type="FunCoup" id="Q5JME8">
    <property type="interactions" value="575"/>
</dbReference>
<dbReference type="PaxDb" id="39947-Q5JME8"/>
<dbReference type="EnsemblPlants" id="Os01t0971100-01">
    <property type="protein sequence ID" value="Os01t0971100-01"/>
    <property type="gene ID" value="Os01g0971100"/>
</dbReference>
<dbReference type="Gramene" id="Os01t0971100-01">
    <property type="protein sequence ID" value="Os01t0971100-01"/>
    <property type="gene ID" value="Os01g0971100"/>
</dbReference>
<dbReference type="KEGG" id="dosa:Os01g0971100"/>
<dbReference type="eggNOG" id="ENOG502RY2K">
    <property type="taxonomic scope" value="Eukaryota"/>
</dbReference>
<dbReference type="HOGENOM" id="CLU_072240_1_0_1"/>
<dbReference type="InParanoid" id="Q5JME8"/>
<dbReference type="OMA" id="REGKQWS"/>
<dbReference type="OrthoDB" id="9049620at2759"/>
<dbReference type="Proteomes" id="UP000000763">
    <property type="component" value="Chromosome 1"/>
</dbReference>
<dbReference type="Proteomes" id="UP000007752">
    <property type="component" value="Chromosome 1"/>
</dbReference>
<dbReference type="Proteomes" id="UP000059680">
    <property type="component" value="Chromosome 1"/>
</dbReference>
<dbReference type="InterPro" id="IPR033347">
    <property type="entry name" value="DI19"/>
</dbReference>
<dbReference type="InterPro" id="IPR027935">
    <property type="entry name" value="Di19_C"/>
</dbReference>
<dbReference type="InterPro" id="IPR008598">
    <property type="entry name" value="Di19_Zn-bd"/>
</dbReference>
<dbReference type="PANTHER" id="PTHR31875">
    <property type="entry name" value="PROTEIN DEHYDRATION-INDUCED 19"/>
    <property type="match status" value="1"/>
</dbReference>
<dbReference type="PANTHER" id="PTHR31875:SF24">
    <property type="entry name" value="PROTEIN DEHYDRATION-INDUCED 19 HOMOLOG 5"/>
    <property type="match status" value="1"/>
</dbReference>
<dbReference type="Pfam" id="PF14571">
    <property type="entry name" value="Di19_C"/>
    <property type="match status" value="1"/>
</dbReference>
<dbReference type="Pfam" id="PF05605">
    <property type="entry name" value="zf-Di19"/>
    <property type="match status" value="1"/>
</dbReference>